<evidence type="ECO:0000250" key="1">
    <source>
        <dbReference type="UniProtKB" id="Q94IP1"/>
    </source>
</evidence>
<evidence type="ECO:0000255" key="2"/>
<evidence type="ECO:0000269" key="3">
    <source ref="1"/>
</evidence>
<evidence type="ECO:0000303" key="4">
    <source ref="1"/>
</evidence>
<evidence type="ECO:0000305" key="5"/>
<evidence type="ECO:0000312" key="6">
    <source>
        <dbReference type="EMBL" id="AAV44089.1"/>
    </source>
</evidence>
<evidence type="ECO:0000312" key="7">
    <source>
        <dbReference type="EMBL" id="BAS93361.1"/>
    </source>
</evidence>
<evidence type="ECO:0000312" key="8">
    <source>
        <dbReference type="EMBL" id="EEE63250.1"/>
    </source>
</evidence>
<reference key="1">
    <citation type="journal article" date="2005" name="J. Plant Biol.">
        <title>cDNA cloning and sequence analysis of the rice cinnamate-4-hydroxylase gene, a cytochrome p450-dependent monooxygenase involved in the general phenylpropanoid pathway.</title>
        <authorList>
            <person name="Yang D.H."/>
            <person name="Chung B.Y."/>
            <person name="Kim J.S."/>
            <person name="Kim J.H."/>
            <person name="Yun P.Y."/>
            <person name="Lee Y.K."/>
            <person name="Lim Y.P."/>
            <person name="Lee M.C."/>
        </authorList>
    </citation>
    <scope>NUCLEOTIDE SEQUENCE [MRNA]</scope>
    <scope>TISSUE SPECIFICITY</scope>
    <scope>INDUCTION BY WOUNDING</scope>
</reference>
<reference key="2">
    <citation type="journal article" date="2005" name="Mol. Genet. Genomics">
        <title>A fine physical map of the rice chromosome 5.</title>
        <authorList>
            <person name="Cheng C.-H."/>
            <person name="Chung M.C."/>
            <person name="Liu S.-M."/>
            <person name="Chen S.-K."/>
            <person name="Kao F.Y."/>
            <person name="Lin S.-J."/>
            <person name="Hsiao S.-H."/>
            <person name="Tseng I.C."/>
            <person name="Hsing Y.-I.C."/>
            <person name="Wu H.-P."/>
            <person name="Chen C.-S."/>
            <person name="Shaw J.-F."/>
            <person name="Wu J."/>
            <person name="Matsumoto T."/>
            <person name="Sasaki T."/>
            <person name="Chen H.-C."/>
            <person name="Chow T.-Y."/>
        </authorList>
    </citation>
    <scope>NUCLEOTIDE SEQUENCE [LARGE SCALE GENOMIC DNA]</scope>
    <source>
        <strain>cv. Nipponbare</strain>
    </source>
</reference>
<reference key="3">
    <citation type="journal article" date="2005" name="Nature">
        <title>The map-based sequence of the rice genome.</title>
        <authorList>
            <consortium name="International rice genome sequencing project (IRGSP)"/>
        </authorList>
    </citation>
    <scope>NUCLEOTIDE SEQUENCE [LARGE SCALE GENOMIC DNA]</scope>
    <source>
        <strain>cv. Nipponbare</strain>
    </source>
</reference>
<reference key="4">
    <citation type="journal article" date="2008" name="Nucleic Acids Res.">
        <title>The rice annotation project database (RAP-DB): 2008 update.</title>
        <authorList>
            <consortium name="The rice annotation project (RAP)"/>
        </authorList>
    </citation>
    <scope>GENOME REANNOTATION</scope>
    <source>
        <strain>cv. Nipponbare</strain>
    </source>
</reference>
<reference key="5">
    <citation type="journal article" date="2013" name="Rice">
        <title>Improvement of the Oryza sativa Nipponbare reference genome using next generation sequence and optical map data.</title>
        <authorList>
            <person name="Kawahara Y."/>
            <person name="de la Bastide M."/>
            <person name="Hamilton J.P."/>
            <person name="Kanamori H."/>
            <person name="McCombie W.R."/>
            <person name="Ouyang S."/>
            <person name="Schwartz D.C."/>
            <person name="Tanaka T."/>
            <person name="Wu J."/>
            <person name="Zhou S."/>
            <person name="Childs K.L."/>
            <person name="Davidson R.M."/>
            <person name="Lin H."/>
            <person name="Quesada-Ocampo L."/>
            <person name="Vaillancourt B."/>
            <person name="Sakai H."/>
            <person name="Lee S.S."/>
            <person name="Kim J."/>
            <person name="Numa H."/>
            <person name="Itoh T."/>
            <person name="Buell C.R."/>
            <person name="Matsumoto T."/>
        </authorList>
    </citation>
    <scope>GENOME REANNOTATION</scope>
    <source>
        <strain>cv. Nipponbare</strain>
    </source>
</reference>
<reference key="6">
    <citation type="journal article" date="2005" name="PLoS Biol.">
        <title>The genomes of Oryza sativa: a history of duplications.</title>
        <authorList>
            <person name="Yu J."/>
            <person name="Wang J."/>
            <person name="Lin W."/>
            <person name="Li S."/>
            <person name="Li H."/>
            <person name="Zhou J."/>
            <person name="Ni P."/>
            <person name="Dong W."/>
            <person name="Hu S."/>
            <person name="Zeng C."/>
            <person name="Zhang J."/>
            <person name="Zhang Y."/>
            <person name="Li R."/>
            <person name="Xu Z."/>
            <person name="Li S."/>
            <person name="Li X."/>
            <person name="Zheng H."/>
            <person name="Cong L."/>
            <person name="Lin L."/>
            <person name="Yin J."/>
            <person name="Geng J."/>
            <person name="Li G."/>
            <person name="Shi J."/>
            <person name="Liu J."/>
            <person name="Lv H."/>
            <person name="Li J."/>
            <person name="Wang J."/>
            <person name="Deng Y."/>
            <person name="Ran L."/>
            <person name="Shi X."/>
            <person name="Wang X."/>
            <person name="Wu Q."/>
            <person name="Li C."/>
            <person name="Ren X."/>
            <person name="Wang J."/>
            <person name="Wang X."/>
            <person name="Li D."/>
            <person name="Liu D."/>
            <person name="Zhang X."/>
            <person name="Ji Z."/>
            <person name="Zhao W."/>
            <person name="Sun Y."/>
            <person name="Zhang Z."/>
            <person name="Bao J."/>
            <person name="Han Y."/>
            <person name="Dong L."/>
            <person name="Ji J."/>
            <person name="Chen P."/>
            <person name="Wu S."/>
            <person name="Liu J."/>
            <person name="Xiao Y."/>
            <person name="Bu D."/>
            <person name="Tan J."/>
            <person name="Yang L."/>
            <person name="Ye C."/>
            <person name="Zhang J."/>
            <person name="Xu J."/>
            <person name="Zhou Y."/>
            <person name="Yu Y."/>
            <person name="Zhang B."/>
            <person name="Zhuang S."/>
            <person name="Wei H."/>
            <person name="Liu B."/>
            <person name="Lei M."/>
            <person name="Yu H."/>
            <person name="Li Y."/>
            <person name="Xu H."/>
            <person name="Wei S."/>
            <person name="He X."/>
            <person name="Fang L."/>
            <person name="Zhang Z."/>
            <person name="Zhang Y."/>
            <person name="Huang X."/>
            <person name="Su Z."/>
            <person name="Tong W."/>
            <person name="Li J."/>
            <person name="Tong Z."/>
            <person name="Li S."/>
            <person name="Ye J."/>
            <person name="Wang L."/>
            <person name="Fang L."/>
            <person name="Lei T."/>
            <person name="Chen C.-S."/>
            <person name="Chen H.-C."/>
            <person name="Xu Z."/>
            <person name="Li H."/>
            <person name="Huang H."/>
            <person name="Zhang F."/>
            <person name="Xu H."/>
            <person name="Li N."/>
            <person name="Zhao C."/>
            <person name="Li S."/>
            <person name="Dong L."/>
            <person name="Huang Y."/>
            <person name="Li L."/>
            <person name="Xi Y."/>
            <person name="Qi Q."/>
            <person name="Li W."/>
            <person name="Zhang B."/>
            <person name="Hu W."/>
            <person name="Zhang Y."/>
            <person name="Tian X."/>
            <person name="Jiao Y."/>
            <person name="Liang X."/>
            <person name="Jin J."/>
            <person name="Gao L."/>
            <person name="Zheng W."/>
            <person name="Hao B."/>
            <person name="Liu S.-M."/>
            <person name="Wang W."/>
            <person name="Yuan L."/>
            <person name="Cao M."/>
            <person name="McDermott J."/>
            <person name="Samudrala R."/>
            <person name="Wang J."/>
            <person name="Wong G.K.-S."/>
            <person name="Yang H."/>
        </authorList>
    </citation>
    <scope>NUCLEOTIDE SEQUENCE [LARGE SCALE GENOMIC DNA]</scope>
    <source>
        <strain>cv. Nipponbare</strain>
    </source>
</reference>
<reference key="7">
    <citation type="journal article" date="2003" name="Science">
        <title>Collection, mapping, and annotation of over 28,000 cDNA clones from japonica rice.</title>
        <authorList>
            <consortium name="The rice full-length cDNA consortium"/>
        </authorList>
    </citation>
    <scope>NUCLEOTIDE SEQUENCE [LARGE SCALE MRNA]</scope>
    <source>
        <strain>cv. Nipponbare</strain>
    </source>
</reference>
<dbReference type="EC" id="1.14.14.91" evidence="1"/>
<dbReference type="EMBL" id="AB207105">
    <property type="protein sequence ID" value="BAF45113.1"/>
    <property type="molecule type" value="mRNA"/>
</dbReference>
<dbReference type="EMBL" id="AC136224">
    <property type="protein sequence ID" value="AAV44089.1"/>
    <property type="molecule type" value="Genomic_DNA"/>
</dbReference>
<dbReference type="EMBL" id="AP008211">
    <property type="protein sequence ID" value="BAF17104.1"/>
    <property type="molecule type" value="Genomic_DNA"/>
</dbReference>
<dbReference type="EMBL" id="AP014961">
    <property type="protein sequence ID" value="BAS93361.1"/>
    <property type="molecule type" value="Genomic_DNA"/>
</dbReference>
<dbReference type="EMBL" id="CM000142">
    <property type="protein sequence ID" value="EEE63250.1"/>
    <property type="molecule type" value="Genomic_DNA"/>
</dbReference>
<dbReference type="EMBL" id="AK100598">
    <property type="protein sequence ID" value="BAG94673.1"/>
    <property type="molecule type" value="mRNA"/>
</dbReference>
<dbReference type="EMBL" id="AK104994">
    <property type="protein sequence ID" value="BAG97065.1"/>
    <property type="molecule type" value="mRNA"/>
</dbReference>
<dbReference type="SMR" id="Q5W6F1"/>
<dbReference type="FunCoup" id="Q5W6F1">
    <property type="interactions" value="568"/>
</dbReference>
<dbReference type="STRING" id="39947.Q5W6F1"/>
<dbReference type="PaxDb" id="39947-Q5W6F1"/>
<dbReference type="EnsemblPlants" id="Os05t0320700-02">
    <property type="protein sequence ID" value="Os05t0320700-02"/>
    <property type="gene ID" value="Os05g0320700"/>
</dbReference>
<dbReference type="Gramene" id="Os05t0320700-02">
    <property type="protein sequence ID" value="Os05t0320700-02"/>
    <property type="gene ID" value="Os05g0320700"/>
</dbReference>
<dbReference type="KEGG" id="dosa:Os05g0320700"/>
<dbReference type="KEGG" id="osa:4338409"/>
<dbReference type="eggNOG" id="KOG0156">
    <property type="taxonomic scope" value="Eukaryota"/>
</dbReference>
<dbReference type="HOGENOM" id="CLU_001570_4_0_1"/>
<dbReference type="InParanoid" id="Q5W6F1"/>
<dbReference type="OMA" id="VPHMNLA"/>
<dbReference type="OrthoDB" id="1470350at2759"/>
<dbReference type="PlantReactome" id="R-OSA-1119418">
    <property type="pathway name" value="Suberin biosynthesis"/>
</dbReference>
<dbReference type="PlantReactome" id="R-OSA-1119582">
    <property type="pathway name" value="Phenylpropanoid biosynthesis, initial reactions"/>
</dbReference>
<dbReference type="UniPathway" id="UPA00825">
    <property type="reaction ID" value="UER00789"/>
</dbReference>
<dbReference type="Proteomes" id="UP000000763">
    <property type="component" value="Chromosome 5"/>
</dbReference>
<dbReference type="Proteomes" id="UP000007752">
    <property type="component" value="Chromosome 5"/>
</dbReference>
<dbReference type="Proteomes" id="UP000059680">
    <property type="component" value="Chromosome 5"/>
</dbReference>
<dbReference type="GO" id="GO:0016020">
    <property type="term" value="C:membrane"/>
    <property type="evidence" value="ECO:0007669"/>
    <property type="project" value="UniProtKB-SubCell"/>
</dbReference>
<dbReference type="GO" id="GO:0020037">
    <property type="term" value="F:heme binding"/>
    <property type="evidence" value="ECO:0007669"/>
    <property type="project" value="InterPro"/>
</dbReference>
<dbReference type="GO" id="GO:0005506">
    <property type="term" value="F:iron ion binding"/>
    <property type="evidence" value="ECO:0007669"/>
    <property type="project" value="InterPro"/>
</dbReference>
<dbReference type="GO" id="GO:0016710">
    <property type="term" value="F:trans-cinnamate 4-monooxygenase activity"/>
    <property type="evidence" value="ECO:0000318"/>
    <property type="project" value="GO_Central"/>
</dbReference>
<dbReference type="GO" id="GO:0009808">
    <property type="term" value="P:lignin metabolic process"/>
    <property type="evidence" value="ECO:0000318"/>
    <property type="project" value="GO_Central"/>
</dbReference>
<dbReference type="FunFam" id="1.10.630.10:FF:000013">
    <property type="entry name" value="Trans-cinnamate 4-monooxygenase"/>
    <property type="match status" value="1"/>
</dbReference>
<dbReference type="Gene3D" id="1.10.630.10">
    <property type="entry name" value="Cytochrome P450"/>
    <property type="match status" value="1"/>
</dbReference>
<dbReference type="InterPro" id="IPR001128">
    <property type="entry name" value="Cyt_P450"/>
</dbReference>
<dbReference type="InterPro" id="IPR017972">
    <property type="entry name" value="Cyt_P450_CS"/>
</dbReference>
<dbReference type="InterPro" id="IPR002401">
    <property type="entry name" value="Cyt_P450_E_grp-I"/>
</dbReference>
<dbReference type="InterPro" id="IPR036396">
    <property type="entry name" value="Cyt_P450_sf"/>
</dbReference>
<dbReference type="PANTHER" id="PTHR47948">
    <property type="entry name" value="TRANS-CINNAMATE 4-MONOOXYGENASE"/>
    <property type="match status" value="1"/>
</dbReference>
<dbReference type="PANTHER" id="PTHR47948:SF1">
    <property type="entry name" value="TRANS-CINNAMATE 4-MONOOXYGENASE"/>
    <property type="match status" value="1"/>
</dbReference>
<dbReference type="Pfam" id="PF00067">
    <property type="entry name" value="p450"/>
    <property type="match status" value="1"/>
</dbReference>
<dbReference type="PRINTS" id="PR00463">
    <property type="entry name" value="EP450I"/>
</dbReference>
<dbReference type="PRINTS" id="PR00385">
    <property type="entry name" value="P450"/>
</dbReference>
<dbReference type="SUPFAM" id="SSF48264">
    <property type="entry name" value="Cytochrome P450"/>
    <property type="match status" value="1"/>
</dbReference>
<dbReference type="PROSITE" id="PS00086">
    <property type="entry name" value="CYTOCHROME_P450"/>
    <property type="match status" value="1"/>
</dbReference>
<comment type="function">
    <text evidence="1">Catalyzes the first oxidative step of the phenylpropanoid pathway in higher plants by transforming trans-cinnamate into p-coumarate (By similarity). The compounds formed by this pathway are essential components for lignification, pollination, and defense against ultraviolet light, predators and pathogens (By similarity).</text>
</comment>
<comment type="catalytic activity">
    <reaction evidence="1">
        <text>(E)-cinnamate + reduced [NADPH--hemoprotein reductase] + O2 = (E)-4-coumarate + oxidized [NADPH--hemoprotein reductase] + H2O + H(+)</text>
        <dbReference type="Rhea" id="RHEA:10608"/>
        <dbReference type="Rhea" id="RHEA-COMP:11964"/>
        <dbReference type="Rhea" id="RHEA-COMP:11965"/>
        <dbReference type="ChEBI" id="CHEBI:12876"/>
        <dbReference type="ChEBI" id="CHEBI:15377"/>
        <dbReference type="ChEBI" id="CHEBI:15378"/>
        <dbReference type="ChEBI" id="CHEBI:15379"/>
        <dbReference type="ChEBI" id="CHEBI:15669"/>
        <dbReference type="ChEBI" id="CHEBI:57618"/>
        <dbReference type="ChEBI" id="CHEBI:58210"/>
        <dbReference type="EC" id="1.14.14.91"/>
    </reaction>
    <physiologicalReaction direction="left-to-right" evidence="1">
        <dbReference type="Rhea" id="RHEA:10609"/>
    </physiologicalReaction>
</comment>
<comment type="cofactor">
    <cofactor evidence="1">
        <name>heme</name>
        <dbReference type="ChEBI" id="CHEBI:30413"/>
    </cofactor>
</comment>
<comment type="pathway">
    <text evidence="5">Phenylpropanoid metabolism; trans-4-coumarate biosynthesis; trans-4-coumarate from trans-cinnamate: step 1/1.</text>
</comment>
<comment type="subcellular location">
    <subcellularLocation>
        <location evidence="2">Membrane</location>
        <topology evidence="2">Single-pass membrane protein</topology>
    </subcellularLocation>
</comment>
<comment type="tissue specificity">
    <text evidence="3">Expressed in roots and leaves.</text>
</comment>
<comment type="induction">
    <text evidence="3">Induced by wounding.</text>
</comment>
<comment type="similarity">
    <text evidence="5">Belongs to the cytochrome P450 family.</text>
</comment>
<gene>
    <name evidence="4" type="primary">C4HL</name>
    <name evidence="7" type="ordered locus">Os05g0320700</name>
    <name evidence="5" type="ordered locus">LOC_Os05g25640</name>
    <name evidence="8" type="ORF">OsJ_18060</name>
    <name evidence="6" type="ORF">OSJNBb0006B22.11</name>
</gene>
<protein>
    <recommendedName>
        <fullName evidence="5">Trans-cinnamate 4-monooxygenase</fullName>
        <ecNumber evidence="1">1.14.14.91</ecNumber>
    </recommendedName>
    <alternativeName>
        <fullName evidence="4">Cinnamic acid 4-hydroxylase</fullName>
        <shortName evidence="5">C4H</shortName>
        <shortName evidence="5">CA4H</shortName>
    </alternativeName>
    <alternativeName>
        <fullName evidence="4">Cinnamic acid 4-hydroxylase-like protein</fullName>
        <shortName evidence="4">C4H-like</shortName>
        <shortName evidence="4">OsC4HL</shortName>
    </alternativeName>
    <alternativeName>
        <fullName evidence="5">Cytochrome P450 73A33</fullName>
    </alternativeName>
    <alternativeName>
        <fullName evidence="5">Cytochrome P450C4H</fullName>
    </alternativeName>
</protein>
<organism>
    <name type="scientific">Oryza sativa subsp. japonica</name>
    <name type="common">Rice</name>
    <dbReference type="NCBI Taxonomy" id="39947"/>
    <lineage>
        <taxon>Eukaryota</taxon>
        <taxon>Viridiplantae</taxon>
        <taxon>Streptophyta</taxon>
        <taxon>Embryophyta</taxon>
        <taxon>Tracheophyta</taxon>
        <taxon>Spermatophyta</taxon>
        <taxon>Magnoliopsida</taxon>
        <taxon>Liliopsida</taxon>
        <taxon>Poales</taxon>
        <taxon>Poaceae</taxon>
        <taxon>BOP clade</taxon>
        <taxon>Oryzoideae</taxon>
        <taxon>Oryzeae</taxon>
        <taxon>Oryzinae</taxon>
        <taxon>Oryza</taxon>
        <taxon>Oryza sativa</taxon>
    </lineage>
</organism>
<accession>Q5W6F1</accession>
<accession>A0A0N7KKJ1</accession>
<proteinExistence type="evidence at transcript level"/>
<feature type="chain" id="PRO_0000451426" description="Trans-cinnamate 4-monooxygenase">
    <location>
        <begin position="1"/>
        <end position="500"/>
    </location>
</feature>
<feature type="transmembrane region" description="Helical" evidence="2">
    <location>
        <begin position="3"/>
        <end position="23"/>
    </location>
</feature>
<feature type="binding site" evidence="1">
    <location>
        <begin position="213"/>
        <end position="218"/>
    </location>
    <ligand>
        <name>(E)-cinnamate</name>
        <dbReference type="ChEBI" id="CHEBI:15669"/>
    </ligand>
</feature>
<feature type="binding site" evidence="1">
    <location>
        <position position="302"/>
    </location>
    <ligand>
        <name>(E)-cinnamate</name>
        <dbReference type="ChEBI" id="CHEBI:15669"/>
    </ligand>
</feature>
<feature type="binding site" description="axial binding residue" evidence="1">
    <location>
        <position position="442"/>
    </location>
    <ligand>
        <name>heme</name>
        <dbReference type="ChEBI" id="CHEBI:30413"/>
    </ligand>
    <ligandPart>
        <name>Fe</name>
        <dbReference type="ChEBI" id="CHEBI:18248"/>
    </ligandPart>
</feature>
<keyword id="KW-0349">Heme</keyword>
<keyword id="KW-0408">Iron</keyword>
<keyword id="KW-0472">Membrane</keyword>
<keyword id="KW-0479">Metal-binding</keyword>
<keyword id="KW-0503">Monooxygenase</keyword>
<keyword id="KW-0560">Oxidoreductase</keyword>
<keyword id="KW-1185">Reference proteome</keyword>
<keyword id="KW-0812">Transmembrane</keyword>
<keyword id="KW-1133">Transmembrane helix</keyword>
<sequence length="500" mass="56883">MDALLVEKVLLGLFVAAVLALVVAKLTGKRLRLPPGPAGAPIVGNWLQVGDDLNHRNLMALARRFGDILLLRMGVRNLVVVSSPDLAKEVLHTQGVEFGSRTRNVVFDIFTGKGQDMVFTVYGDHWRKMRRIMTVPFFTNKVVAQNRAGWEEEARLVVEDVRRDPAAATSGVVIRRRLQLMMYNDMFRIMFDRRFDSVDDPLFNKLKAFNAERSRLSQSFEYNYGDFIPVLRPFLRRYLARCHQLKSQRMKLFEDHFVQERKRVMEQTGEIRCAMDHILEAERKGEINHDNVLYIVENINVAAIETTLWSIEWGIAELVNHPSIQSKVREEMASVLGGAAVTEPDLERLPYLQAVVKETLRLRMAIPLLVPHMNLADGKLAGYDIPAESKILVNAWFLANDPKRWVRPDEFRPERFLEEEKAVEAHGNDFRFVPFGVGRRSCPGIILALPIIGITLGRLVQSFDLLPPPGMDKVDTTEKPGQFSNQILKHATVVCKPIDA</sequence>
<name>TCMO_ORYSJ</name>